<proteinExistence type="inferred from homology"/>
<evidence type="ECO:0000250" key="1"/>
<evidence type="ECO:0000250" key="2">
    <source>
        <dbReference type="UniProtKB" id="P0C8R6"/>
    </source>
</evidence>
<evidence type="ECO:0000255" key="3"/>
<evidence type="ECO:0000305" key="4"/>
<name>3L231_OPHHA</name>
<accession>Q53B55</accession>
<dbReference type="EMBL" id="AY596931">
    <property type="protein sequence ID" value="AAT97253.1"/>
    <property type="molecule type" value="mRNA"/>
</dbReference>
<dbReference type="SMR" id="Q53B55"/>
<dbReference type="GO" id="GO:0005576">
    <property type="term" value="C:extracellular region"/>
    <property type="evidence" value="ECO:0007669"/>
    <property type="project" value="UniProtKB-SubCell"/>
</dbReference>
<dbReference type="GO" id="GO:0030550">
    <property type="term" value="F:acetylcholine receptor inhibitor activity"/>
    <property type="evidence" value="ECO:0007669"/>
    <property type="project" value="UniProtKB-KW"/>
</dbReference>
<dbReference type="GO" id="GO:0099106">
    <property type="term" value="F:ion channel regulator activity"/>
    <property type="evidence" value="ECO:0007669"/>
    <property type="project" value="UniProtKB-KW"/>
</dbReference>
<dbReference type="GO" id="GO:0090729">
    <property type="term" value="F:toxin activity"/>
    <property type="evidence" value="ECO:0007669"/>
    <property type="project" value="UniProtKB-KW"/>
</dbReference>
<dbReference type="CDD" id="cd00206">
    <property type="entry name" value="TFP_snake_toxin"/>
    <property type="match status" value="1"/>
</dbReference>
<dbReference type="Gene3D" id="2.10.60.10">
    <property type="entry name" value="CD59"/>
    <property type="match status" value="1"/>
</dbReference>
<dbReference type="InterPro" id="IPR003571">
    <property type="entry name" value="Snake_3FTx"/>
</dbReference>
<dbReference type="InterPro" id="IPR045860">
    <property type="entry name" value="Snake_toxin-like_sf"/>
</dbReference>
<dbReference type="InterPro" id="IPR018354">
    <property type="entry name" value="Snake_toxin_con_site"/>
</dbReference>
<dbReference type="InterPro" id="IPR054131">
    <property type="entry name" value="Toxin_cobra-type"/>
</dbReference>
<dbReference type="Pfam" id="PF21947">
    <property type="entry name" value="Toxin_cobra-type"/>
    <property type="match status" value="1"/>
</dbReference>
<dbReference type="SUPFAM" id="SSF57302">
    <property type="entry name" value="Snake toxin-like"/>
    <property type="match status" value="1"/>
</dbReference>
<dbReference type="PROSITE" id="PS00272">
    <property type="entry name" value="SNAKE_TOXIN"/>
    <property type="match status" value="1"/>
</dbReference>
<feature type="signal peptide" evidence="3">
    <location>
        <begin position="1"/>
        <end position="19"/>
    </location>
</feature>
<feature type="chain" id="PRO_0000316090" description="Long neurotoxin-like OH-31">
    <location>
        <begin position="20"/>
        <end position="94"/>
    </location>
</feature>
<feature type="disulfide bond" evidence="4">
    <location>
        <begin position="35"/>
        <end position="55"/>
    </location>
</feature>
<feature type="disulfide bond" evidence="4">
    <location>
        <begin position="37"/>
        <end position="66"/>
    </location>
</feature>
<feature type="disulfide bond" evidence="1">
    <location>
        <begin position="70"/>
        <end position="81"/>
    </location>
</feature>
<feature type="disulfide bond" evidence="1">
    <location>
        <begin position="82"/>
        <end position="87"/>
    </location>
</feature>
<comment type="function">
    <text evidence="2">Binds with high affinity to muscular nicotinic acetylcholine receptors (nAChRs), whereas it binds with a low affinity to neuronal alpha-7/CHRNA7 nAChRs.</text>
</comment>
<comment type="subcellular location">
    <subcellularLocation>
        <location evidence="1">Secreted</location>
    </subcellularLocation>
</comment>
<comment type="tissue specificity">
    <text evidence="4">Expressed by the venom gland.</text>
</comment>
<comment type="miscellaneous">
    <text evidence="4">Has the length of long neurotoxins, but only 4 disulfide bonds, as short neurotoxins. In addition, the position of cysteine residues is not conserved.</text>
</comment>
<comment type="similarity">
    <text evidence="4">Belongs to the three-finger toxin family. Long-chain subfamily. Type II alpha-neurotoxin sub-subfamily.</text>
</comment>
<reference key="1">
    <citation type="journal article" date="2004" name="Toxicon">
        <title>Cloning and purification of alpha-neurotoxins from king cobra (Ophiophagus hannah).</title>
        <authorList>
            <person name="He Y.-Y."/>
            <person name="Lee W.-H."/>
            <person name="Zhang Y."/>
        </authorList>
    </citation>
    <scope>NUCLEOTIDE SEQUENCE [MRNA]</scope>
    <source>
        <tissue>Venom gland</tissue>
    </source>
</reference>
<protein>
    <recommendedName>
        <fullName>Long neurotoxin-like OH-31</fullName>
    </recommendedName>
</protein>
<organism>
    <name type="scientific">Ophiophagus hannah</name>
    <name type="common">King cobra</name>
    <name type="synonym">Naja hannah</name>
    <dbReference type="NCBI Taxonomy" id="8665"/>
    <lineage>
        <taxon>Eukaryota</taxon>
        <taxon>Metazoa</taxon>
        <taxon>Chordata</taxon>
        <taxon>Craniata</taxon>
        <taxon>Vertebrata</taxon>
        <taxon>Euteleostomi</taxon>
        <taxon>Lepidosauria</taxon>
        <taxon>Squamata</taxon>
        <taxon>Bifurcata</taxon>
        <taxon>Unidentata</taxon>
        <taxon>Episquamata</taxon>
        <taxon>Toxicofera</taxon>
        <taxon>Serpentes</taxon>
        <taxon>Colubroidea</taxon>
        <taxon>Elapidae</taxon>
        <taxon>Elapinae</taxon>
        <taxon>Ophiophagus</taxon>
    </lineage>
</organism>
<sequence>MKTLLLTLVVVTILCLDLGLELTNAPDSWSSRRTCLCPAWVPLRSRPVAGHSKQCGSRGRRVDLGCAATCPIVKPGVNINCCSTDNCNPFPKRS</sequence>
<keyword id="KW-0008">Acetylcholine receptor inhibiting toxin</keyword>
<keyword id="KW-1015">Disulfide bond</keyword>
<keyword id="KW-0872">Ion channel impairing toxin</keyword>
<keyword id="KW-0528">Neurotoxin</keyword>
<keyword id="KW-0629">Postsynaptic neurotoxin</keyword>
<keyword id="KW-0964">Secreted</keyword>
<keyword id="KW-0732">Signal</keyword>
<keyword id="KW-0800">Toxin</keyword>